<gene>
    <name evidence="19" type="primary">hpm3</name>
</gene>
<sequence length="2049" mass="222890">MVTVPQTILYFGDQTDSWVDSLDQLYRQAATIPWLQTFLDDLVKVFKEESRGMDRALQDSVGEYSTLLDLADRYRHGTDEIGMVRAVLLHAARGGMLLQWVKKESQLVDLNGSKPEALGISGGLTNLAALAISTDFESLYDAVIEAARIFVRLCRFTSVRSRAMEDRPGVWGWAVLGITPEELSKVLEQFQSSMGIPAIKRAKVGVTGDRWSTVIGPPSVLDLFIHQCPAVRNLPKNELSIHALQHTVTVTEADLDFIVGSAELLSHPIVPDFKVWGMDDPVASYQNWGEMLRAIVTQVLSKPLDITKVIAQLNTHLGPRHVDVRVIGPSSHTPYLASSLKAAGSKAIFQTDKTLEQLQPKKLPPGRIAIVGMAGRGPGCENVDEFWDVIMAKQDRCEEIPKDRFDINEFYCTEHGEGCTTTTKYGCFMNKPGNFDSRFFHVSPREALLMDPGHRQFMMSTYEALETAGYSDGQTRDVDPNRIAAFYGQSNDDWHMVSHYTLGCDAYTLQGAQRAFGAGRIAFHFKWEGPTYSLDSACASTSSAIHLACVSLLSKDVDMAVVGAANVVGYPHSWTSLSKSGVLSDTGNCKTYCDDADGYCRADFVGSVVLKRLEDAVEQNDNILAVVAGSGRNHSGNSSSITTSDAGAQERLFHKIMHSARVSPDEISYVEMHGTGTQIGDPAEMSAVTNVFRKRKANNPLTVGGIKANVGHAEASAGMASLLKCIQMFQKDIMPPQARMPHTLNPKYPSLSELNIHIPSEPKEFKAIGERPRRILLNNFDAAGGNASLILEDFPSTVKENADPRPSHVIVSSAKTQSSYHANKRNLLKWLRKNKDAKLEDVAYTTTARRMHHPLRFSCSASTTEELISKLEADTADATASRGSPVVFVFTGQGSHYAGMGAELYKTCPAFREEVNLCASISEEHGFPPYVDIITNKDVDITTKDTMQTQLAVVTLEIALAAFWKASGIQPSAVMGHSLGEYVALQVAGVLSLADLLYLVGNRARLLLERCEADTCAMLAVSSSAASIRELIDQRPQSSFEIACKNSPNATVISGSTDEISELQSSFTASRARALSVPYGFHSFQMDPMLEDYIVLAGGVTYSPPKIPVASTLLASIVESSGVFNASYLGQQTRQAVDFVGALGALKEKFADPLWLEIGPSQICNSFVRATLSPSPGKILSTLEANTNPWASIAKCLAGAYKDGVAVDWLAVHAPFKGGLKLVKLPAYAWDLKDFWIVYSEANKAARALAPAPSFETQRISTCAQQIVEESSSPSLHVSARAAISDPGFMALVDGHRMRDVSICPGSVFCEAGLAVSKYALKYSGRKDTVETRLTINNLSLKRPLTKSLVGTDGELLTTVVADKASSDTLQVSWKASSSHASYDLGSCEITICDAQTLQTSWNRSSYFVKARMNELIKNVKSGNGHRMLPSILYTLFASTVDYDPTFKSVKEAFISNEFDEAAAEVVLQKNPAGTQFFASPYWGESVVHLAGFLVNSNPARKTASQTTFMMQSLESVEQTADLEAGRTYYTYARVLHEEEDTVSCDLFVFDSEKMVMQCSGLSFHEVSNNVLDRLLGKASPPVKQVSHQKAPVLVPAESKPALKAAVEAAPKAPEPVKTEVKKISSSESELFHTILESIAKETGTQVSDFTDDMELAELGVDSIMGIEIAAGVSSRTGLDVLLPSFVVDYPTIGDLRNEFARSSTSTPPSKTFSEFSIVDATPESTRSSSRAPSEKKEPAPASEKSEELVIVPSAVVEDSSPLPSARITLIQGRSSSGKQPFYLIADGAGSIATYIHLAPFKDKRPVYGIDSPFLRCPSRLTTQVGIEGVAKIIFEALIKCQPEGPFDLGGFSGGAMLSYEVSRQLAAAGRVVSSLLLIDMCSPRPLGVEDTIEVGWKVYETIASQDKLWNASSNTQQHLKAVFACVAAYHPPPITPAQRPKRTAIIWAKKGMVDRCSRDEKVMKFLADKGIPTESYPGFMEDPKLGAVAWGLPHKSAADLGPNGWDKFLGETLCLSIDSDHLDMPMPGHVHLLQAAMEESFKYFSEAN</sequence>
<evidence type="ECO:0000250" key="1">
    <source>
        <dbReference type="UniProtKB" id="Q5ATJ7"/>
    </source>
</evidence>
<evidence type="ECO:0000250" key="2">
    <source>
        <dbReference type="UniProtKB" id="Q5B0D0"/>
    </source>
</evidence>
<evidence type="ECO:0000255" key="3"/>
<evidence type="ECO:0000255" key="4">
    <source>
        <dbReference type="PROSITE-ProRule" id="PRU00258"/>
    </source>
</evidence>
<evidence type="ECO:0000255" key="5">
    <source>
        <dbReference type="PROSITE-ProRule" id="PRU01348"/>
    </source>
</evidence>
<evidence type="ECO:0000255" key="6">
    <source>
        <dbReference type="PROSITE-ProRule" id="PRU01363"/>
    </source>
</evidence>
<evidence type="ECO:0000255" key="7">
    <source>
        <dbReference type="PROSITE-ProRule" id="PRU10022"/>
    </source>
</evidence>
<evidence type="ECO:0000256" key="8">
    <source>
        <dbReference type="SAM" id="MobiDB-lite"/>
    </source>
</evidence>
<evidence type="ECO:0000269" key="9">
    <source>
    </source>
</evidence>
<evidence type="ECO:0000269" key="10">
    <source>
    </source>
</evidence>
<evidence type="ECO:0000269" key="11">
    <source>
    </source>
</evidence>
<evidence type="ECO:0000269" key="12">
    <source>
    </source>
</evidence>
<evidence type="ECO:0000269" key="13">
    <source>
    </source>
</evidence>
<evidence type="ECO:0000269" key="14">
    <source>
    </source>
</evidence>
<evidence type="ECO:0000269" key="15">
    <source>
    </source>
</evidence>
<evidence type="ECO:0000269" key="16">
    <source>
    </source>
</evidence>
<evidence type="ECO:0000269" key="17">
    <source>
    </source>
</evidence>
<evidence type="ECO:0000269" key="18">
    <source>
    </source>
</evidence>
<evidence type="ECO:0000303" key="19">
    <source>
    </source>
</evidence>
<proteinExistence type="evidence at protein level"/>
<comment type="function">
    <text evidence="12 15">Non-reducing polyketide synthase; part of the gene cluster that mediates the biosynthesis of hypothemycin, a resorcylic acid lactone (RAL) that irreversibly inhibits a subset of protein kinases with a conserved cysteine in the ATP binding site such as human ERK2 (PubMed:18567690). The first step is performed by both PKSs hmp3 and hmp8 and leads to the production of 7',8'-dehydrozearalenol (DHZ) (PubMed:18567690, PubMed:20222707). The highly reducing PKS hpm8 synthesizes the reduced hexaketide (7S,11S,2E,8E)-7,11-dihydroxy-dodeca-2,8-dienoate, which is transferred downstream to the non-reducing PKS hpm3 (PubMed:20222707). Hpm3 then extends the reduced hexaketide to a nonaketide, after which regioselective cyclization and macrolactonization affords DHZ (PubMed:20222707). The next step is the conversion of DHZ into aigialomycin C and is performed by the O-methyltransferase hmp5, the FAD-binding monooxygenase hmp7, and the cytochrome P450 monooxygenase hmp1 (PubMed:18567690). The wide substrate tolerance of the hmp5 and hmp7 implies that the reactions from DHZ to aigialomycin C can occur in any order (PubMed:18567690). The steps from aigialomycin C to hypothemycin are less well established (PubMed:18567690). The FAD-linked oxidoreductase hmp9 presumably catalyzes oxidation of the C-6' hydroxyl to a ketone (PubMed:18567690). The timing of this oxidation is important, since the resulting enone functional group is a Michael acceptor that can react spontaneously with glutathione, an abundant metabolite in fungal cells (PubMed:18567690). The glutathione S-transferase hmp2 catalyzes cis-trans isomerization of the 7',8' double bond with equilibrium favoring the trans isomer (PubMed:18567690). The hpm6-encoded transporter might preferentially pump hypothemycin out of the cell relative to the trans isomer aigialomycin A. The cis-to-trans isomerization may be coupled with C-4' hydroxylation, since all known hypothemycin analogs containing the enone functional group also have hydroxyl groups at both C-4' and C-5' (PubMed:18567690).</text>
</comment>
<comment type="pathway">
    <text evidence="12 15">Secondary metabolite biosynthesis.</text>
</comment>
<comment type="domain">
    <text evidence="2">Multidomain protein; including a starter unit:ACP transacylase (SAT) that selects the starter unit; a ketosynthase (KS) that catalyzes repeated decarboxylative condensation to elongate the polyketide backbone; a malonyl-CoA:ACP transacylase (MAT) that selects and transfers the extender unit malonyl-CoA; a product template (PT) domain that controls the immediate cyclization regioselectivity of the reactive polyketide backbone; and an acyl-carrier protein (ACP) that serves as the tether of the growing and completed polyketide via its phosphopantetheinyl arm (By similarity).</text>
</comment>
<comment type="domain">
    <text evidence="15">The SAT domain at the N-terminus facilitates crosstalk between the two PKSs hmp3 and hmp8 encoded by the cluster (PubMed:20222707).</text>
</comment>
<comment type="domain">
    <text evidence="1">The release of the polyketide chain from the non-reducing polyketide synthase is mediated by the thioesterase (TE) domain localized at the C-ter of the protein (By similarity).</text>
</comment>
<comment type="biotechnology">
    <text evidence="9 10 11 13 14 16 17 18">Hypothemycin is an antifungal agent that exhibits excellent activity against Peronophythora litchii, which could be helpful for the storage of harvest litchi fruit (PubMed:24106914). Hypothemycin is a strong inhibitor of a subset of MAP kinases such as human ERK2 (PubMed:18571434, PubMed:20118535, PubMed:26371861). It can therefore be used as an anti-cancer drug thanks to its inhibitory activity of Ras-mediated cellular signals (PubMed:10421424, PubMed:10595743). It can also inhibit Trypanosoma brucei kinase TbCLK1 which is a good candidate as a therapeutic target for African trypanosomiasis (PubMed:23853713). Finally, hypothemycin also has inhibitor activity of T cell activation (PubMed:10598882).</text>
</comment>
<reference key="1">
    <citation type="journal article" date="2008" name="Appl. Environ. Microbiol.">
        <title>Genes for the biosynthesis of the fungal polyketides hypothemycin from Hypomyces subiculosus and radicicol from Pochonia chlamydosporia.</title>
        <authorList>
            <person name="Reeves C.D."/>
            <person name="Hu Z."/>
            <person name="Reid R."/>
            <person name="Kealey J.T."/>
        </authorList>
    </citation>
    <scope>NUCLEOTIDE SEQUENCE [GENOMIC DNA]</scope>
    <scope>FUNCTION</scope>
    <scope>CATALYTIC ACTIVITY</scope>
    <source>
        <strain>DSM11931</strain>
    </source>
</reference>
<reference key="2">
    <citation type="journal article" date="1999" name="Immunopharmacology">
        <title>Hypothemycin inhibits the proliferative response and modulates the production of cytokines during T cell activation.</title>
        <authorList>
            <person name="Camacho R."/>
            <person name="Staruch M.J."/>
            <person name="DaSilva C."/>
            <person name="Koprak S."/>
            <person name="Sewell T."/>
            <person name="Salituro G."/>
            <person name="Dumont F.J."/>
        </authorList>
    </citation>
    <scope>BIOTECHNOLOGY</scope>
</reference>
<reference key="3">
    <citation type="journal article" date="1999" name="Jpn. J. Cancer Res.">
        <title>Antitumor efficacy of hypothemycin, a new Ras-signaling inhibitor.</title>
        <authorList>
            <person name="Tanaka H."/>
            <person name="Nishida K."/>
            <person name="Sugita K."/>
            <person name="Yoshioka T."/>
        </authorList>
    </citation>
    <scope>BIOTECHNOLOGY</scope>
</reference>
<reference key="4">
    <citation type="journal article" date="1999" name="Life Sci.">
        <title>Suppression of oncogenic transformation by hypothemycin associated with accelerated cyclin D1 degradation through ubiquitin-proteasome pathway.</title>
        <authorList>
            <person name="Sonoda H."/>
            <person name="Omi K."/>
            <person name="Hojo K."/>
            <person name="Nishida K."/>
            <person name="Omura S."/>
            <person name="Sugita K."/>
        </authorList>
    </citation>
    <scope>BIOTECHNOLOGY</scope>
</reference>
<reference key="5">
    <citation type="journal article" date="2008" name="J. Struct. Biol.">
        <title>Molecular modeling and crystal structure of ERK2-hypothemycin complexes.</title>
        <authorList>
            <person name="Rastelli G."/>
            <person name="Rosenfeld R."/>
            <person name="Reid R."/>
            <person name="Santi D.V."/>
        </authorList>
    </citation>
    <scope>BIOTECHNOLOGY</scope>
</reference>
<reference key="6">
    <citation type="journal article" date="2010" name="Biol. Pharm. Bull.">
        <title>The resorcylic acid lactone hypothemycin selectively inhibits the mitogen-activated protein kinase kinase-extracellular signal-regulated kinase pathway in cells.</title>
        <authorList>
            <person name="Fukazawa H."/>
            <person name="Ikeda Y."/>
            <person name="Fukuyama M."/>
            <person name="Suzuki T."/>
            <person name="Hori H."/>
            <person name="Okuda T."/>
            <person name="Uehara Y."/>
        </authorList>
    </citation>
    <scope>BIOTECHNOLOGY</scope>
</reference>
<reference key="7">
    <citation type="journal article" date="2010" name="J. Am. Chem. Soc.">
        <title>Enzymatic synthesis of resorcylic acid lactones by cooperation of fungal iterative polyketide synthases involved in hypothemycin biosynthesis.</title>
        <authorList>
            <person name="Zhou H."/>
            <person name="Qiao K."/>
            <person name="Gao Z."/>
            <person name="Meehan M.J."/>
            <person name="Li J.W."/>
            <person name="Zhao X."/>
            <person name="Dorrestein P.C."/>
            <person name="Vederas J.C."/>
            <person name="Tang Y."/>
        </authorList>
    </citation>
    <scope>FUNCTION</scope>
    <scope>CATALYTIC ACTIVITY</scope>
    <scope>MUTAGENESIS OF SER-121</scope>
    <scope>DOMAIN</scope>
</reference>
<reference key="8">
    <citation type="journal article" date="2013" name="Elife">
        <title>Hypothemycin, a fungal natural product, identifies therapeutic targets in Trypanosoma brucei [corrected].</title>
        <authorList>
            <person name="Nishino M."/>
            <person name="Choy J.W."/>
            <person name="Gushwa N.N."/>
            <person name="Oses-Prieto J.A."/>
            <person name="Koupparis K."/>
            <person name="Burlingame A.L."/>
            <person name="Renslo A.R."/>
            <person name="McKerrow J.H."/>
            <person name="Taunton J."/>
        </authorList>
    </citation>
    <scope>BIOTECHNOLOGY</scope>
</reference>
<reference key="9">
    <citation type="journal article" date="2013" name="J. Agric. Food Chem.">
        <title>Antifungal activity of hypothemycin against Peronophythora litchii in vitro and in vivo.</title>
        <authorList>
            <person name="Xu L."/>
            <person name="Xue J."/>
            <person name="Wu P."/>
            <person name="Wang D."/>
            <person name="Lin L."/>
            <person name="Jiang Y."/>
            <person name="Duan X."/>
            <person name="Wei X."/>
        </authorList>
    </citation>
    <scope>BIOTECHNOLOGY</scope>
</reference>
<reference key="10">
    <citation type="journal article" date="2015" name="Int. Immunopharmacol.">
        <title>Hypothemycin inhibits tumor necrosis factor-alpha production by tristetraprolin-dependent down-regulation of mRNA stability in lipopolysaccharide-stimulated macrophages.</title>
        <authorList>
            <person name="Park K.H."/>
            <person name="Yoon Y.D."/>
            <person name="Kang M.R."/>
            <person name="Yun J."/>
            <person name="Oh S.J."/>
            <person name="Lee C.W."/>
            <person name="Lee M.Y."/>
            <person name="Han S.B."/>
            <person name="Kim Y."/>
            <person name="Kang J.S."/>
        </authorList>
    </citation>
    <scope>BIOTECHNOLOGY</scope>
</reference>
<keyword id="KW-0012">Acyltransferase</keyword>
<keyword id="KW-0511">Multifunctional enzyme</keyword>
<keyword id="KW-0596">Phosphopantetheine</keyword>
<keyword id="KW-0597">Phosphoprotein</keyword>
<keyword id="KW-0808">Transferase</keyword>
<dbReference type="EC" id="2.3.1.-" evidence="12 15"/>
<dbReference type="EMBL" id="EU520418">
    <property type="protein sequence ID" value="ACD39762.1"/>
    <property type="molecule type" value="Genomic_DNA"/>
</dbReference>
<dbReference type="SMR" id="B3FWS8"/>
<dbReference type="ESTHER" id="hypsb-hpm3">
    <property type="family name" value="Thioesterase"/>
</dbReference>
<dbReference type="GO" id="GO:0004315">
    <property type="term" value="F:3-oxoacyl-[acyl-carrier-protein] synthase activity"/>
    <property type="evidence" value="ECO:0007669"/>
    <property type="project" value="InterPro"/>
</dbReference>
<dbReference type="GO" id="GO:0004312">
    <property type="term" value="F:fatty acid synthase activity"/>
    <property type="evidence" value="ECO:0007669"/>
    <property type="project" value="TreeGrafter"/>
</dbReference>
<dbReference type="GO" id="GO:0031177">
    <property type="term" value="F:phosphopantetheine binding"/>
    <property type="evidence" value="ECO:0007669"/>
    <property type="project" value="InterPro"/>
</dbReference>
<dbReference type="GO" id="GO:0006633">
    <property type="term" value="P:fatty acid biosynthetic process"/>
    <property type="evidence" value="ECO:0007669"/>
    <property type="project" value="InterPro"/>
</dbReference>
<dbReference type="GO" id="GO:0046189">
    <property type="term" value="P:phenol-containing compound biosynthetic process"/>
    <property type="evidence" value="ECO:0007669"/>
    <property type="project" value="UniProtKB-ARBA"/>
</dbReference>
<dbReference type="GO" id="GO:0030639">
    <property type="term" value="P:polyketide biosynthetic process"/>
    <property type="evidence" value="ECO:0007669"/>
    <property type="project" value="UniProtKB-ARBA"/>
</dbReference>
<dbReference type="GO" id="GO:0009403">
    <property type="term" value="P:toxin biosynthetic process"/>
    <property type="evidence" value="ECO:0007669"/>
    <property type="project" value="UniProtKB-ARBA"/>
</dbReference>
<dbReference type="CDD" id="cd00833">
    <property type="entry name" value="PKS"/>
    <property type="match status" value="1"/>
</dbReference>
<dbReference type="Gene3D" id="3.30.70.3290">
    <property type="match status" value="1"/>
</dbReference>
<dbReference type="Gene3D" id="3.40.47.10">
    <property type="match status" value="1"/>
</dbReference>
<dbReference type="Gene3D" id="1.10.1200.10">
    <property type="entry name" value="ACP-like"/>
    <property type="match status" value="1"/>
</dbReference>
<dbReference type="Gene3D" id="3.40.50.1820">
    <property type="entry name" value="alpha/beta hydrolase"/>
    <property type="match status" value="1"/>
</dbReference>
<dbReference type="Gene3D" id="3.30.70.250">
    <property type="entry name" value="Malonyl-CoA ACP transacylase, ACP-binding"/>
    <property type="match status" value="1"/>
</dbReference>
<dbReference type="Gene3D" id="3.40.366.10">
    <property type="entry name" value="Malonyl-Coenzyme A Acyl Carrier Protein, domain 2"/>
    <property type="match status" value="1"/>
</dbReference>
<dbReference type="Gene3D" id="3.10.129.110">
    <property type="entry name" value="Polyketide synthase dehydratase"/>
    <property type="match status" value="1"/>
</dbReference>
<dbReference type="InterPro" id="IPR029058">
    <property type="entry name" value="AB_hydrolase_fold"/>
</dbReference>
<dbReference type="InterPro" id="IPR001227">
    <property type="entry name" value="Ac_transferase_dom_sf"/>
</dbReference>
<dbReference type="InterPro" id="IPR036736">
    <property type="entry name" value="ACP-like_sf"/>
</dbReference>
<dbReference type="InterPro" id="IPR014043">
    <property type="entry name" value="Acyl_transferase_dom"/>
</dbReference>
<dbReference type="InterPro" id="IPR016035">
    <property type="entry name" value="Acyl_Trfase/lysoPLipase"/>
</dbReference>
<dbReference type="InterPro" id="IPR018201">
    <property type="entry name" value="Ketoacyl_synth_AS"/>
</dbReference>
<dbReference type="InterPro" id="IPR014031">
    <property type="entry name" value="Ketoacyl_synth_C"/>
</dbReference>
<dbReference type="InterPro" id="IPR014030">
    <property type="entry name" value="Ketoacyl_synth_N"/>
</dbReference>
<dbReference type="InterPro" id="IPR016036">
    <property type="entry name" value="Malonyl_transacylase_ACP-bd"/>
</dbReference>
<dbReference type="InterPro" id="IPR020841">
    <property type="entry name" value="PKS_Beta-ketoAc_synthase_dom"/>
</dbReference>
<dbReference type="InterPro" id="IPR042104">
    <property type="entry name" value="PKS_dehydratase_sf"/>
</dbReference>
<dbReference type="InterPro" id="IPR049551">
    <property type="entry name" value="PKS_DH_C"/>
</dbReference>
<dbReference type="InterPro" id="IPR049900">
    <property type="entry name" value="PKS_mFAS_DH"/>
</dbReference>
<dbReference type="InterPro" id="IPR050091">
    <property type="entry name" value="PKS_NRPS_Biosynth_Enz"/>
</dbReference>
<dbReference type="InterPro" id="IPR020806">
    <property type="entry name" value="PKS_PP-bd"/>
</dbReference>
<dbReference type="InterPro" id="IPR009081">
    <property type="entry name" value="PP-bd_ACP"/>
</dbReference>
<dbReference type="InterPro" id="IPR006162">
    <property type="entry name" value="Ppantetheine_attach_site"/>
</dbReference>
<dbReference type="InterPro" id="IPR030918">
    <property type="entry name" value="PT_fungal_PKS"/>
</dbReference>
<dbReference type="InterPro" id="IPR032088">
    <property type="entry name" value="SAT"/>
</dbReference>
<dbReference type="InterPro" id="IPR001031">
    <property type="entry name" value="Thioesterase"/>
</dbReference>
<dbReference type="InterPro" id="IPR016039">
    <property type="entry name" value="Thiolase-like"/>
</dbReference>
<dbReference type="NCBIfam" id="TIGR04532">
    <property type="entry name" value="PT_fungal_PKS"/>
    <property type="match status" value="1"/>
</dbReference>
<dbReference type="PANTHER" id="PTHR43775">
    <property type="entry name" value="FATTY ACID SYNTHASE"/>
    <property type="match status" value="1"/>
</dbReference>
<dbReference type="PANTHER" id="PTHR43775:SF37">
    <property type="entry name" value="SI:DKEY-61P9.11"/>
    <property type="match status" value="1"/>
</dbReference>
<dbReference type="Pfam" id="PF00698">
    <property type="entry name" value="Acyl_transf_1"/>
    <property type="match status" value="1"/>
</dbReference>
<dbReference type="Pfam" id="PF22621">
    <property type="entry name" value="CurL-like_PKS_C"/>
    <property type="match status" value="1"/>
</dbReference>
<dbReference type="Pfam" id="PF00109">
    <property type="entry name" value="ketoacyl-synt"/>
    <property type="match status" value="1"/>
</dbReference>
<dbReference type="Pfam" id="PF02801">
    <property type="entry name" value="Ketoacyl-synt_C"/>
    <property type="match status" value="1"/>
</dbReference>
<dbReference type="Pfam" id="PF00550">
    <property type="entry name" value="PP-binding"/>
    <property type="match status" value="1"/>
</dbReference>
<dbReference type="Pfam" id="PF14765">
    <property type="entry name" value="PS-DH"/>
    <property type="match status" value="1"/>
</dbReference>
<dbReference type="Pfam" id="PF16073">
    <property type="entry name" value="SAT"/>
    <property type="match status" value="1"/>
</dbReference>
<dbReference type="Pfam" id="PF00975">
    <property type="entry name" value="Thioesterase"/>
    <property type="match status" value="1"/>
</dbReference>
<dbReference type="SMART" id="SM00827">
    <property type="entry name" value="PKS_AT"/>
    <property type="match status" value="1"/>
</dbReference>
<dbReference type="SMART" id="SM00825">
    <property type="entry name" value="PKS_KS"/>
    <property type="match status" value="1"/>
</dbReference>
<dbReference type="SMART" id="SM00823">
    <property type="entry name" value="PKS_PP"/>
    <property type="match status" value="1"/>
</dbReference>
<dbReference type="SUPFAM" id="SSF47336">
    <property type="entry name" value="ACP-like"/>
    <property type="match status" value="1"/>
</dbReference>
<dbReference type="SUPFAM" id="SSF53474">
    <property type="entry name" value="alpha/beta-Hydrolases"/>
    <property type="match status" value="1"/>
</dbReference>
<dbReference type="SUPFAM" id="SSF52151">
    <property type="entry name" value="FabD/lysophospholipase-like"/>
    <property type="match status" value="1"/>
</dbReference>
<dbReference type="SUPFAM" id="SSF55048">
    <property type="entry name" value="Probable ACP-binding domain of malonyl-CoA ACP transacylase"/>
    <property type="match status" value="1"/>
</dbReference>
<dbReference type="SUPFAM" id="SSF53901">
    <property type="entry name" value="Thiolase-like"/>
    <property type="match status" value="1"/>
</dbReference>
<dbReference type="PROSITE" id="PS50075">
    <property type="entry name" value="CARRIER"/>
    <property type="match status" value="1"/>
</dbReference>
<dbReference type="PROSITE" id="PS00606">
    <property type="entry name" value="KS3_1"/>
    <property type="match status" value="1"/>
</dbReference>
<dbReference type="PROSITE" id="PS52004">
    <property type="entry name" value="KS3_2"/>
    <property type="match status" value="1"/>
</dbReference>
<dbReference type="PROSITE" id="PS00012">
    <property type="entry name" value="PHOSPHOPANTETHEINE"/>
    <property type="match status" value="1"/>
</dbReference>
<dbReference type="PROSITE" id="PS52019">
    <property type="entry name" value="PKS_MFAS_DH"/>
    <property type="match status" value="1"/>
</dbReference>
<protein>
    <recommendedName>
        <fullName evidence="19">Non-reducing polyketide synthase hmp3</fullName>
        <shortName evidence="19">NR-PKS hmp3</shortName>
        <ecNumber evidence="12 15">2.3.1.-</ecNumber>
    </recommendedName>
    <alternativeName>
        <fullName evidence="19">Hypothemycin biosynthesis cluster protein hpm3</fullName>
    </alternativeName>
</protein>
<feature type="chain" id="PRO_0000437584" description="Non-reducing polyketide synthase hmp3">
    <location>
        <begin position="1"/>
        <end position="2049"/>
    </location>
</feature>
<feature type="domain" description="Ketosynthase family 3 (KS3)" evidence="5">
    <location>
        <begin position="365"/>
        <end position="793"/>
    </location>
</feature>
<feature type="domain" description="PKS/mFAS DH" evidence="6">
    <location>
        <begin position="1265"/>
        <end position="1573"/>
    </location>
</feature>
<feature type="domain" description="Carrier" evidence="4">
    <location>
        <begin position="1626"/>
        <end position="1704"/>
    </location>
</feature>
<feature type="region of interest" description="N-terminal acylcarrier protein transacylase (SAT) domain" evidence="3">
    <location>
        <begin position="9"/>
        <end position="246"/>
    </location>
</feature>
<feature type="region of interest" description="Malonyl-CoA:ACP transacylase (MAT) domain" evidence="3">
    <location>
        <begin position="887"/>
        <end position="1146"/>
    </location>
</feature>
<feature type="region of interest" description="N-terminal hotdog fold" evidence="6">
    <location>
        <begin position="1265"/>
        <end position="1404"/>
    </location>
</feature>
<feature type="region of interest" description="Product template (PT) domain" evidence="3">
    <location>
        <begin position="1269"/>
        <end position="1572"/>
    </location>
</feature>
<feature type="region of interest" description="C-terminal hotdog fold" evidence="6">
    <location>
        <begin position="1425"/>
        <end position="1573"/>
    </location>
</feature>
<feature type="region of interest" description="Disordered" evidence="8">
    <location>
        <begin position="1700"/>
        <end position="1747"/>
    </location>
</feature>
<feature type="region of interest" description="Thioesterase (TE) domain" evidence="3">
    <location>
        <begin position="1761"/>
        <end position="1951"/>
    </location>
</feature>
<feature type="compositionally biased region" description="Low complexity" evidence="8">
    <location>
        <begin position="1703"/>
        <end position="1717"/>
    </location>
</feature>
<feature type="compositionally biased region" description="Polar residues" evidence="8">
    <location>
        <begin position="1723"/>
        <end position="1732"/>
    </location>
</feature>
<feature type="compositionally biased region" description="Basic and acidic residues" evidence="8">
    <location>
        <begin position="1733"/>
        <end position="1747"/>
    </location>
</feature>
<feature type="active site" description="For beta-ketoacyl synthase activity" evidence="5">
    <location>
        <position position="538"/>
    </location>
</feature>
<feature type="active site" description="For beta-ketoacyl synthase activity" evidence="5">
    <location>
        <position position="673"/>
    </location>
</feature>
<feature type="active site" description="For beta-ketoacyl synthase activity" evidence="5">
    <location>
        <position position="712"/>
    </location>
</feature>
<feature type="active site" description="For acyl/malonyl transferase activity" evidence="7">
    <location>
        <position position="978"/>
    </location>
</feature>
<feature type="modified residue" description="O-(pantetheine 4'-phosphoryl)serine" evidence="4">
    <location>
        <position position="1663"/>
    </location>
</feature>
<feature type="mutagenesis site" description="Abolishes the synthesis of hypothemycin." evidence="15">
    <original>S</original>
    <variation>A</variation>
    <location>
        <position position="121"/>
    </location>
</feature>
<accession>B3FWS8</accession>
<name>HPM3_HYPSB</name>
<organism>
    <name type="scientific">Hypomyces subiculosus</name>
    <name type="common">Nectria subiculosa</name>
    <dbReference type="NCBI Taxonomy" id="193393"/>
    <lineage>
        <taxon>Eukaryota</taxon>
        <taxon>Fungi</taxon>
        <taxon>Dikarya</taxon>
        <taxon>Ascomycota</taxon>
        <taxon>Pezizomycotina</taxon>
        <taxon>Sordariomycetes</taxon>
        <taxon>Hypocreomycetidae</taxon>
        <taxon>Hypocreales</taxon>
        <taxon>Hypocreaceae</taxon>
        <taxon>Hypomyces</taxon>
    </lineage>
</organism>